<proteinExistence type="inferred from homology"/>
<comment type="function">
    <text evidence="1">Specifically methylates position 2 of adenine 2503 in 23S rRNA and position 2 of adenine 37 in tRNAs. m2A2503 modification seems to play a crucial role in the proofreading step occurring at the peptidyl transferase center and thus would serve to optimize ribosomal fidelity.</text>
</comment>
<comment type="catalytic activity">
    <reaction evidence="1">
        <text>adenosine(2503) in 23S rRNA + 2 reduced [2Fe-2S]-[ferredoxin] + 2 S-adenosyl-L-methionine = 2-methyladenosine(2503) in 23S rRNA + 5'-deoxyadenosine + L-methionine + 2 oxidized [2Fe-2S]-[ferredoxin] + S-adenosyl-L-homocysteine</text>
        <dbReference type="Rhea" id="RHEA:42916"/>
        <dbReference type="Rhea" id="RHEA-COMP:10000"/>
        <dbReference type="Rhea" id="RHEA-COMP:10001"/>
        <dbReference type="Rhea" id="RHEA-COMP:10152"/>
        <dbReference type="Rhea" id="RHEA-COMP:10282"/>
        <dbReference type="ChEBI" id="CHEBI:17319"/>
        <dbReference type="ChEBI" id="CHEBI:33737"/>
        <dbReference type="ChEBI" id="CHEBI:33738"/>
        <dbReference type="ChEBI" id="CHEBI:57844"/>
        <dbReference type="ChEBI" id="CHEBI:57856"/>
        <dbReference type="ChEBI" id="CHEBI:59789"/>
        <dbReference type="ChEBI" id="CHEBI:74411"/>
        <dbReference type="ChEBI" id="CHEBI:74497"/>
        <dbReference type="EC" id="2.1.1.192"/>
    </reaction>
</comment>
<comment type="catalytic activity">
    <reaction evidence="1">
        <text>adenosine(37) in tRNA + 2 reduced [2Fe-2S]-[ferredoxin] + 2 S-adenosyl-L-methionine = 2-methyladenosine(37) in tRNA + 5'-deoxyadenosine + L-methionine + 2 oxidized [2Fe-2S]-[ferredoxin] + S-adenosyl-L-homocysteine</text>
        <dbReference type="Rhea" id="RHEA:43332"/>
        <dbReference type="Rhea" id="RHEA-COMP:10000"/>
        <dbReference type="Rhea" id="RHEA-COMP:10001"/>
        <dbReference type="Rhea" id="RHEA-COMP:10162"/>
        <dbReference type="Rhea" id="RHEA-COMP:10485"/>
        <dbReference type="ChEBI" id="CHEBI:17319"/>
        <dbReference type="ChEBI" id="CHEBI:33737"/>
        <dbReference type="ChEBI" id="CHEBI:33738"/>
        <dbReference type="ChEBI" id="CHEBI:57844"/>
        <dbReference type="ChEBI" id="CHEBI:57856"/>
        <dbReference type="ChEBI" id="CHEBI:59789"/>
        <dbReference type="ChEBI" id="CHEBI:74411"/>
        <dbReference type="ChEBI" id="CHEBI:74497"/>
        <dbReference type="EC" id="2.1.1.192"/>
    </reaction>
</comment>
<comment type="cofactor">
    <cofactor evidence="1">
        <name>[4Fe-4S] cluster</name>
        <dbReference type="ChEBI" id="CHEBI:49883"/>
    </cofactor>
    <text evidence="1">Binds 1 [4Fe-4S] cluster. The cluster is coordinated with 3 cysteines and an exchangeable S-adenosyl-L-methionine.</text>
</comment>
<comment type="subcellular location">
    <subcellularLocation>
        <location evidence="1">Cytoplasm</location>
    </subcellularLocation>
</comment>
<comment type="miscellaneous">
    <text evidence="1">Reaction proceeds by a ping-pong mechanism involving intermediate methylation of a conserved cysteine residue.</text>
</comment>
<comment type="similarity">
    <text evidence="1">Belongs to the radical SAM superfamily. RlmN family.</text>
</comment>
<organism>
    <name type="scientific">Pseudomonas putida (strain ATCC 700007 / DSM 6899 / JCM 31910 / BCRC 17059 / LMG 24140 / F1)</name>
    <dbReference type="NCBI Taxonomy" id="351746"/>
    <lineage>
        <taxon>Bacteria</taxon>
        <taxon>Pseudomonadati</taxon>
        <taxon>Pseudomonadota</taxon>
        <taxon>Gammaproteobacteria</taxon>
        <taxon>Pseudomonadales</taxon>
        <taxon>Pseudomonadaceae</taxon>
        <taxon>Pseudomonas</taxon>
    </lineage>
</organism>
<dbReference type="EC" id="2.1.1.192" evidence="1"/>
<dbReference type="EMBL" id="CP000712">
    <property type="protein sequence ID" value="ABQ77042.1"/>
    <property type="molecule type" value="Genomic_DNA"/>
</dbReference>
<dbReference type="SMR" id="A5VYT2"/>
<dbReference type="KEGG" id="ppf:Pput_0880"/>
<dbReference type="eggNOG" id="COG0820">
    <property type="taxonomic scope" value="Bacteria"/>
</dbReference>
<dbReference type="HOGENOM" id="CLU_029101_0_0_6"/>
<dbReference type="GO" id="GO:0005737">
    <property type="term" value="C:cytoplasm"/>
    <property type="evidence" value="ECO:0007669"/>
    <property type="project" value="UniProtKB-SubCell"/>
</dbReference>
<dbReference type="GO" id="GO:0051539">
    <property type="term" value="F:4 iron, 4 sulfur cluster binding"/>
    <property type="evidence" value="ECO:0007669"/>
    <property type="project" value="UniProtKB-UniRule"/>
</dbReference>
<dbReference type="GO" id="GO:0046872">
    <property type="term" value="F:metal ion binding"/>
    <property type="evidence" value="ECO:0007669"/>
    <property type="project" value="UniProtKB-KW"/>
</dbReference>
<dbReference type="GO" id="GO:0070040">
    <property type="term" value="F:rRNA (adenine(2503)-C2-)-methyltransferase activity"/>
    <property type="evidence" value="ECO:0007669"/>
    <property type="project" value="UniProtKB-UniRule"/>
</dbReference>
<dbReference type="GO" id="GO:0019843">
    <property type="term" value="F:rRNA binding"/>
    <property type="evidence" value="ECO:0007669"/>
    <property type="project" value="UniProtKB-UniRule"/>
</dbReference>
<dbReference type="GO" id="GO:0002935">
    <property type="term" value="F:tRNA (adenine(37)-C2)-methyltransferase activity"/>
    <property type="evidence" value="ECO:0007669"/>
    <property type="project" value="UniProtKB-UniRule"/>
</dbReference>
<dbReference type="GO" id="GO:0000049">
    <property type="term" value="F:tRNA binding"/>
    <property type="evidence" value="ECO:0007669"/>
    <property type="project" value="UniProtKB-UniRule"/>
</dbReference>
<dbReference type="GO" id="GO:0070475">
    <property type="term" value="P:rRNA base methylation"/>
    <property type="evidence" value="ECO:0007669"/>
    <property type="project" value="UniProtKB-UniRule"/>
</dbReference>
<dbReference type="GO" id="GO:0030488">
    <property type="term" value="P:tRNA methylation"/>
    <property type="evidence" value="ECO:0007669"/>
    <property type="project" value="UniProtKB-UniRule"/>
</dbReference>
<dbReference type="CDD" id="cd01335">
    <property type="entry name" value="Radical_SAM"/>
    <property type="match status" value="1"/>
</dbReference>
<dbReference type="FunFam" id="1.10.150.530:FF:000003">
    <property type="entry name" value="Dual-specificity RNA methyltransferase RlmN"/>
    <property type="match status" value="1"/>
</dbReference>
<dbReference type="FunFam" id="3.20.20.70:FF:000008">
    <property type="entry name" value="Dual-specificity RNA methyltransferase RlmN"/>
    <property type="match status" value="1"/>
</dbReference>
<dbReference type="Gene3D" id="1.10.150.530">
    <property type="match status" value="1"/>
</dbReference>
<dbReference type="Gene3D" id="3.20.20.70">
    <property type="entry name" value="Aldolase class I"/>
    <property type="match status" value="1"/>
</dbReference>
<dbReference type="HAMAP" id="MF_01849">
    <property type="entry name" value="RNA_methyltr_RlmN"/>
    <property type="match status" value="1"/>
</dbReference>
<dbReference type="InterPro" id="IPR013785">
    <property type="entry name" value="Aldolase_TIM"/>
</dbReference>
<dbReference type="InterPro" id="IPR040072">
    <property type="entry name" value="Methyltransferase_A"/>
</dbReference>
<dbReference type="InterPro" id="IPR048641">
    <property type="entry name" value="RlmN_N"/>
</dbReference>
<dbReference type="InterPro" id="IPR027492">
    <property type="entry name" value="RNA_MTrfase_RlmN"/>
</dbReference>
<dbReference type="InterPro" id="IPR004383">
    <property type="entry name" value="rRNA_lsu_MTrfase_RlmN/Cfr"/>
</dbReference>
<dbReference type="InterPro" id="IPR007197">
    <property type="entry name" value="rSAM"/>
</dbReference>
<dbReference type="NCBIfam" id="TIGR00048">
    <property type="entry name" value="rRNA_mod_RlmN"/>
    <property type="match status" value="1"/>
</dbReference>
<dbReference type="PANTHER" id="PTHR30544">
    <property type="entry name" value="23S RRNA METHYLTRANSFERASE"/>
    <property type="match status" value="1"/>
</dbReference>
<dbReference type="PANTHER" id="PTHR30544:SF5">
    <property type="entry name" value="RADICAL SAM CORE DOMAIN-CONTAINING PROTEIN"/>
    <property type="match status" value="1"/>
</dbReference>
<dbReference type="Pfam" id="PF04055">
    <property type="entry name" value="Radical_SAM"/>
    <property type="match status" value="1"/>
</dbReference>
<dbReference type="Pfam" id="PF21016">
    <property type="entry name" value="RlmN_N"/>
    <property type="match status" value="1"/>
</dbReference>
<dbReference type="PIRSF" id="PIRSF006004">
    <property type="entry name" value="CHP00048"/>
    <property type="match status" value="1"/>
</dbReference>
<dbReference type="SFLD" id="SFLDF00275">
    <property type="entry name" value="adenosine_C2_methyltransferase"/>
    <property type="match status" value="1"/>
</dbReference>
<dbReference type="SFLD" id="SFLDS00029">
    <property type="entry name" value="Radical_SAM"/>
    <property type="match status" value="1"/>
</dbReference>
<dbReference type="SUPFAM" id="SSF102114">
    <property type="entry name" value="Radical SAM enzymes"/>
    <property type="match status" value="1"/>
</dbReference>
<dbReference type="PROSITE" id="PS51918">
    <property type="entry name" value="RADICAL_SAM"/>
    <property type="match status" value="1"/>
</dbReference>
<gene>
    <name evidence="1" type="primary">rlmN</name>
    <name type="ordered locus">Pput_0880</name>
</gene>
<accession>A5VYT2</accession>
<protein>
    <recommendedName>
        <fullName evidence="1">Dual-specificity RNA methyltransferase RlmN</fullName>
        <ecNumber evidence="1">2.1.1.192</ecNumber>
    </recommendedName>
    <alternativeName>
        <fullName evidence="1">23S rRNA (adenine(2503)-C(2))-methyltransferase</fullName>
    </alternativeName>
    <alternativeName>
        <fullName evidence="1">23S rRNA m2A2503 methyltransferase</fullName>
    </alternativeName>
    <alternativeName>
        <fullName evidence="1">Ribosomal RNA large subunit methyltransferase N</fullName>
    </alternativeName>
    <alternativeName>
        <fullName evidence="1">tRNA (adenine(37)-C(2))-methyltransferase</fullName>
    </alternativeName>
    <alternativeName>
        <fullName evidence="1">tRNA m2A37 methyltransferase</fullName>
    </alternativeName>
</protein>
<evidence type="ECO:0000255" key="1">
    <source>
        <dbReference type="HAMAP-Rule" id="MF_01849"/>
    </source>
</evidence>
<evidence type="ECO:0000255" key="2">
    <source>
        <dbReference type="PROSITE-ProRule" id="PRU01266"/>
    </source>
</evidence>
<name>RLMN_PSEP1</name>
<sequence length="381" mass="41914">MTTSTGKINLLGLTQPEMEQFFDSIGEKRFRAGQVMKWIHHFGVSDFAAMTNVGKVLREKLEAVAEIRPPEVVSEDISADGTRKWVIRVASGSCVETVYIPTDDRGTLCVSSQAGCALDCSFCSTGKQGFNSNLTAAEVIGQVWLANKSFGTVPAKVDRAITNVVMMGMGEPLLNFDNVIAAMKIMMDDLGYGISKRRVTLSTSGVVPMIDELAKHIDVSLALSLHAPNDELRNKLVPINKKYPLKVLLESCMGYMSTLGGKRVLTVEYTLLKDVNDQPEHAAQMIELLRDVPCKINLIPFNPFPHSGYERPSNNAIRRFQDLLHHGGFNVTTRTTRGDDIDAACGQLVGQVNDRTRRSERYIAVRQLSADVELPDSAASH</sequence>
<feature type="chain" id="PRO_0000350340" description="Dual-specificity RNA methyltransferase RlmN">
    <location>
        <begin position="1"/>
        <end position="381"/>
    </location>
</feature>
<feature type="domain" description="Radical SAM core" evidence="2">
    <location>
        <begin position="102"/>
        <end position="342"/>
    </location>
</feature>
<feature type="active site" description="Proton acceptor" evidence="1">
    <location>
        <position position="96"/>
    </location>
</feature>
<feature type="active site" description="S-methylcysteine intermediate" evidence="1">
    <location>
        <position position="345"/>
    </location>
</feature>
<feature type="binding site" evidence="1">
    <location>
        <position position="116"/>
    </location>
    <ligand>
        <name>[4Fe-4S] cluster</name>
        <dbReference type="ChEBI" id="CHEBI:49883"/>
        <note>4Fe-4S-S-AdoMet</note>
    </ligand>
</feature>
<feature type="binding site" evidence="1">
    <location>
        <position position="120"/>
    </location>
    <ligand>
        <name>[4Fe-4S] cluster</name>
        <dbReference type="ChEBI" id="CHEBI:49883"/>
        <note>4Fe-4S-S-AdoMet</note>
    </ligand>
</feature>
<feature type="binding site" evidence="1">
    <location>
        <position position="123"/>
    </location>
    <ligand>
        <name>[4Fe-4S] cluster</name>
        <dbReference type="ChEBI" id="CHEBI:49883"/>
        <note>4Fe-4S-S-AdoMet</note>
    </ligand>
</feature>
<feature type="binding site" evidence="1">
    <location>
        <begin position="170"/>
        <end position="171"/>
    </location>
    <ligand>
        <name>S-adenosyl-L-methionine</name>
        <dbReference type="ChEBI" id="CHEBI:59789"/>
    </ligand>
</feature>
<feature type="binding site" evidence="1">
    <location>
        <position position="202"/>
    </location>
    <ligand>
        <name>S-adenosyl-L-methionine</name>
        <dbReference type="ChEBI" id="CHEBI:59789"/>
    </ligand>
</feature>
<feature type="binding site" evidence="1">
    <location>
        <begin position="224"/>
        <end position="226"/>
    </location>
    <ligand>
        <name>S-adenosyl-L-methionine</name>
        <dbReference type="ChEBI" id="CHEBI:59789"/>
    </ligand>
</feature>
<feature type="binding site" evidence="1">
    <location>
        <position position="302"/>
    </location>
    <ligand>
        <name>S-adenosyl-L-methionine</name>
        <dbReference type="ChEBI" id="CHEBI:59789"/>
    </ligand>
</feature>
<feature type="disulfide bond" description="(transient)" evidence="1">
    <location>
        <begin position="109"/>
        <end position="345"/>
    </location>
</feature>
<keyword id="KW-0004">4Fe-4S</keyword>
<keyword id="KW-0963">Cytoplasm</keyword>
<keyword id="KW-1015">Disulfide bond</keyword>
<keyword id="KW-0408">Iron</keyword>
<keyword id="KW-0411">Iron-sulfur</keyword>
<keyword id="KW-0479">Metal-binding</keyword>
<keyword id="KW-0489">Methyltransferase</keyword>
<keyword id="KW-0698">rRNA processing</keyword>
<keyword id="KW-0949">S-adenosyl-L-methionine</keyword>
<keyword id="KW-0808">Transferase</keyword>
<keyword id="KW-0819">tRNA processing</keyword>
<reference key="1">
    <citation type="submission" date="2007-05" db="EMBL/GenBank/DDBJ databases">
        <title>Complete sequence of Pseudomonas putida F1.</title>
        <authorList>
            <consortium name="US DOE Joint Genome Institute"/>
            <person name="Copeland A."/>
            <person name="Lucas S."/>
            <person name="Lapidus A."/>
            <person name="Barry K."/>
            <person name="Detter J.C."/>
            <person name="Glavina del Rio T."/>
            <person name="Hammon N."/>
            <person name="Israni S."/>
            <person name="Dalin E."/>
            <person name="Tice H."/>
            <person name="Pitluck S."/>
            <person name="Chain P."/>
            <person name="Malfatti S."/>
            <person name="Shin M."/>
            <person name="Vergez L."/>
            <person name="Schmutz J."/>
            <person name="Larimer F."/>
            <person name="Land M."/>
            <person name="Hauser L."/>
            <person name="Kyrpides N."/>
            <person name="Lykidis A."/>
            <person name="Parales R."/>
            <person name="Richardson P."/>
        </authorList>
    </citation>
    <scope>NUCLEOTIDE SEQUENCE [LARGE SCALE GENOMIC DNA]</scope>
    <source>
        <strain>ATCC 700007 / DSM 6899 / JCM 31910 / BCRC 17059 / LMG 24140 / F1</strain>
    </source>
</reference>